<dbReference type="EMBL" id="X04466">
    <property type="protein sequence ID" value="CAA28152.1"/>
    <property type="molecule type" value="Genomic_DNA"/>
</dbReference>
<dbReference type="PIR" id="A29050">
    <property type="entry name" value="MZEC8"/>
</dbReference>
<dbReference type="RefSeq" id="NP_052377.1">
    <property type="nucleotide sequence ID" value="NC_002119.1"/>
</dbReference>
<dbReference type="Gene3D" id="3.40.50.300">
    <property type="entry name" value="P-loop containing nucleotide triphosphate hydrolases"/>
    <property type="match status" value="2"/>
</dbReference>
<dbReference type="InterPro" id="IPR016387">
    <property type="entry name" value="Mobilization_MobA"/>
</dbReference>
<dbReference type="InterPro" id="IPR027417">
    <property type="entry name" value="P-loop_NTPase"/>
</dbReference>
<dbReference type="PIRSF" id="PIRSF003273">
    <property type="entry name" value="Mobilization_MobA"/>
    <property type="match status" value="1"/>
</dbReference>
<dbReference type="SUPFAM" id="SSF52540">
    <property type="entry name" value="P-loop containing nucleoside triphosphate hydrolases"/>
    <property type="match status" value="1"/>
</dbReference>
<protein>
    <recommendedName>
        <fullName>Mobilization protein A</fullName>
        <shortName>Protein B</shortName>
    </recommendedName>
</protein>
<accession>P08098</accession>
<reference key="1">
    <citation type="journal article" date="1987" name="Gene">
        <title>Structure and nucleotide sequence of the region encoding the mobilization proteins of plasmid CloDF13.</title>
        <authorList>
            <person name="van Putten A.J."/>
            <person name="Jochems G.J."/>
            <person name="de Lang R."/>
            <person name="Nijkamp H.J.J."/>
        </authorList>
    </citation>
    <scope>NUCLEOTIDE SEQUENCE [GENOMIC DNA]</scope>
</reference>
<reference key="2">
    <citation type="journal article" date="1986" name="Plasmid">
        <title>The complete nucleotide sequence of the bacteriocinogenic plasmid CloDF13.</title>
        <authorList>
            <person name="Nijkamp H.J.J."/>
            <person name="de Lang R."/>
            <person name="Stuitje A.R."/>
            <person name="van den Elsen P.J.M."/>
            <person name="Veltkamp E."/>
            <person name="van Putten A.J."/>
        </authorList>
    </citation>
    <scope>NUCLEOTIDE SEQUENCE [GENOMIC DNA]</scope>
</reference>
<name>MOBA1_ECOLX</name>
<gene>
    <name type="primary">mobA</name>
    <name type="synonym">B</name>
</gene>
<sequence length="529" mass="57841">MGLSHKERREYGRSYKRDNNRTAPFSCWPRWIRPGGWSGHGGMSGTTRTGVTARLAFWGGWLSPCLSRAGEKPSCVRTSTRTQIITCCSRLTCSGLPGARAGWLSGLCWRGSGVLLLDGHFAAADEAVNRKLNRRAGAQPATGEMTDVRQPAFRGAGTVNALARFFHGRGPETAGVFLGKDEQGEPVLVPRDTWRKTNIQILGLPGSGKSVMATNALIRSVRDFGDAVVYFDQRGPVAALLPAHCPNFTLLDLRPGKPAQLNLFRDLDQYALKNLLVAGFNLSETGHVADHYRISEQKAAKLIAEQVSAGGKHSAGAGGGVRAAGGPEKGREGADHQAGERGRPERPADGQRHRRGGDNQRRRLLYVIGSMDDEAVIRVQKMLFARCAQIIIARDEFRRWPHASIMLDEIKYLLSKYVLNALGTVRSRDCNLRLAHHAGRLRAAGQDLPADFVKTTVLDNTPIRWFYRAASQESRSGAGQTGEIRVDVERRGPAGRRGTWSISAGTASSRRSRPLFDVNTLQHLLTGSR</sequence>
<evidence type="ECO:0000256" key="1">
    <source>
        <dbReference type="SAM" id="MobiDB-lite"/>
    </source>
</evidence>
<feature type="chain" id="PRO_0000068391" description="Mobilization protein A">
    <location>
        <begin position="1"/>
        <end position="529"/>
    </location>
</feature>
<feature type="region of interest" description="Disordered" evidence="1">
    <location>
        <begin position="311"/>
        <end position="356"/>
    </location>
</feature>
<feature type="compositionally biased region" description="Basic and acidic residues" evidence="1">
    <location>
        <begin position="328"/>
        <end position="356"/>
    </location>
</feature>
<organism>
    <name type="scientific">Escherichia coli</name>
    <dbReference type="NCBI Taxonomy" id="562"/>
    <lineage>
        <taxon>Bacteria</taxon>
        <taxon>Pseudomonadati</taxon>
        <taxon>Pseudomonadota</taxon>
        <taxon>Gammaproteobacteria</taxon>
        <taxon>Enterobacterales</taxon>
        <taxon>Enterobacteriaceae</taxon>
        <taxon>Escherichia</taxon>
    </lineage>
</organism>
<comment type="function">
    <text>This protein is essential to promote the specific transfer of the plasmid in the presence of conjugative plasmids.</text>
</comment>
<proteinExistence type="predicted"/>
<keyword id="KW-0184">Conjugation</keyword>
<keyword id="KW-0499">Mobility protein</keyword>
<keyword id="KW-0614">Plasmid</keyword>
<geneLocation type="plasmid">
    <name>Clo DF13</name>
</geneLocation>